<accession>P56854</accession>
<comment type="function">
    <text evidence="2 3 4">Toxin that blocks vertebrate P/Q-type (Cav2.1/CACNA1A) and R-type (Cav2.3/CACNA1E) voltage-gated calcium channels. Also inhibits sodium channels (Nav) in bovine chromaffin cells by delaying sodium channel inactivation.</text>
</comment>
<comment type="subcellular location">
    <subcellularLocation>
        <location>Secreted</location>
    </subcellularLocation>
</comment>
<comment type="tissue specificity">
    <text>Expressed by the venom gland.</text>
</comment>
<comment type="domain">
    <text evidence="1">The presence of a 'disulfide through disulfide knot' structurally defines this protein as a knottin.</text>
</comment>
<comment type="similarity">
    <text evidence="5">Belongs to the neurotoxin 10 (Hwtx-1) family. 56 (SNX-482) subfamily.</text>
</comment>
<name>TX482_HYSGI</name>
<organism>
    <name type="scientific">Hysterocrates gigas</name>
    <name type="common">Cameroon red baboon tarantula</name>
    <dbReference type="NCBI Taxonomy" id="118972"/>
    <lineage>
        <taxon>Eukaryota</taxon>
        <taxon>Metazoa</taxon>
        <taxon>Ecdysozoa</taxon>
        <taxon>Arthropoda</taxon>
        <taxon>Chelicerata</taxon>
        <taxon>Arachnida</taxon>
        <taxon>Araneae</taxon>
        <taxon>Mygalomorphae</taxon>
        <taxon>Theraphosidae</taxon>
        <taxon>Hysterocrates</taxon>
    </lineage>
</organism>
<proteinExistence type="evidence at protein level"/>
<dbReference type="SMR" id="P56854"/>
<dbReference type="ArachnoServer" id="AS000281">
    <property type="toxin name" value="omega-theraphotoxin-Hg1a"/>
</dbReference>
<dbReference type="GO" id="GO:0005576">
    <property type="term" value="C:extracellular region"/>
    <property type="evidence" value="ECO:0007669"/>
    <property type="project" value="UniProtKB-SubCell"/>
</dbReference>
<dbReference type="GO" id="GO:0005246">
    <property type="term" value="F:calcium channel regulator activity"/>
    <property type="evidence" value="ECO:0007669"/>
    <property type="project" value="UniProtKB-KW"/>
</dbReference>
<dbReference type="GO" id="GO:0008200">
    <property type="term" value="F:ion channel inhibitor activity"/>
    <property type="evidence" value="ECO:0007669"/>
    <property type="project" value="InterPro"/>
</dbReference>
<dbReference type="GO" id="GO:0017080">
    <property type="term" value="F:sodium channel regulator activity"/>
    <property type="evidence" value="ECO:0007669"/>
    <property type="project" value="UniProtKB-KW"/>
</dbReference>
<dbReference type="GO" id="GO:0090729">
    <property type="term" value="F:toxin activity"/>
    <property type="evidence" value="ECO:0007669"/>
    <property type="project" value="UniProtKB-KW"/>
</dbReference>
<dbReference type="InterPro" id="IPR011696">
    <property type="entry name" value="Huwentoxin-1"/>
</dbReference>
<dbReference type="Pfam" id="PF07740">
    <property type="entry name" value="Toxin_12"/>
    <property type="match status" value="1"/>
</dbReference>
<dbReference type="SUPFAM" id="SSF57059">
    <property type="entry name" value="omega toxin-like"/>
    <property type="match status" value="1"/>
</dbReference>
<protein>
    <recommendedName>
        <fullName>Omega-theraphotoxin-Hg1a</fullName>
        <shortName>Omega-TRTX-Hg1a</shortName>
    </recommendedName>
    <alternativeName>
        <fullName>Toxin SNX-482</fullName>
        <shortName>SNX482</shortName>
    </alternativeName>
</protein>
<reference key="1">
    <citation type="journal article" date="1998" name="Biochemistry">
        <title>Selective peptide antagonist of the class E calcium channel from the venom of the tarantula Hysterocrates gigas.</title>
        <authorList>
            <person name="Newcomb R."/>
            <person name="Szoke B."/>
            <person name="Palma A."/>
            <person name="Wang G."/>
            <person name="Chen X.H."/>
            <person name="Hopkins W."/>
            <person name="Cong R."/>
            <person name="Miller J."/>
            <person name="Urge L."/>
            <person name="Tarczy-Hornoch K."/>
            <person name="Loo J.A."/>
            <person name="Dooley D.J."/>
            <person name="Nadasdi L."/>
            <person name="Tsien R.W."/>
            <person name="Lemos J."/>
            <person name="Miljanich G."/>
        </authorList>
    </citation>
    <scope>PROTEIN SEQUENCE</scope>
    <scope>FUNCTION</scope>
    <source>
        <tissue>Venom</tissue>
    </source>
</reference>
<reference key="2">
    <citation type="journal article" date="2001" name="Biophys. J.">
        <title>Interaction of SNX482 with domains III and IV inhibits activation gating of alpha(1E) (Ca(V)2.3) calcium channels.</title>
        <authorList>
            <person name="Bourinet E."/>
            <person name="Stotz S.C."/>
            <person name="Spaetgens R.L."/>
            <person name="Dayanithi G."/>
            <person name="Lemos J."/>
            <person name="Nargeot J."/>
            <person name="Zamponi G.W."/>
        </authorList>
    </citation>
    <scope>FUNCTION</scope>
</reference>
<reference key="3">
    <citation type="journal article" date="2003" name="Eur. J. Pharmacol.">
        <title>SNX482 selectively blocks P/Q Ca2+ channels and delays the inactivation of Na+ channels of chromaffin cells.</title>
        <authorList>
            <person name="Arroyo G."/>
            <person name="Aldea M."/>
            <person name="Fuentealba J."/>
            <person name="Albillos A."/>
            <person name="Garcia A.G."/>
        </authorList>
    </citation>
    <scope>FUNCTION</scope>
</reference>
<sequence length="41" mass="4501">GVDKAGCRYMFGGCSVNDDCCPRLGCHSLFSYCAWDLTFSD</sequence>
<feature type="chain" id="PRO_0000087673" description="Omega-theraphotoxin-Hg1a">
    <location>
        <begin position="1"/>
        <end position="41"/>
    </location>
</feature>
<feature type="disulfide bond" evidence="1">
    <location>
        <begin position="7"/>
        <end position="21"/>
    </location>
</feature>
<feature type="disulfide bond" evidence="1">
    <location>
        <begin position="14"/>
        <end position="26"/>
    </location>
</feature>
<feature type="disulfide bond" evidence="1">
    <location>
        <begin position="20"/>
        <end position="33"/>
    </location>
</feature>
<evidence type="ECO:0000250" key="1"/>
<evidence type="ECO:0000269" key="2">
    <source>
    </source>
</evidence>
<evidence type="ECO:0000269" key="3">
    <source>
    </source>
</evidence>
<evidence type="ECO:0000269" key="4">
    <source>
    </source>
</evidence>
<evidence type="ECO:0000305" key="5"/>
<keyword id="KW-0108">Calcium channel impairing toxin</keyword>
<keyword id="KW-0903">Direct protein sequencing</keyword>
<keyword id="KW-1015">Disulfide bond</keyword>
<keyword id="KW-0872">Ion channel impairing toxin</keyword>
<keyword id="KW-0960">Knottin</keyword>
<keyword id="KW-0528">Neurotoxin</keyword>
<keyword id="KW-0964">Secreted</keyword>
<keyword id="KW-0800">Toxin</keyword>
<keyword id="KW-1218">Voltage-gated calcium channel impairing toxin</keyword>
<keyword id="KW-0738">Voltage-gated sodium channel impairing toxin</keyword>